<name>GNAT3_HUMAN</name>
<dbReference type="EMBL" id="AC004862">
    <property type="status" value="NOT_ANNOTATED_CDS"/>
    <property type="molecule type" value="Genomic_DNA"/>
</dbReference>
<dbReference type="EMBL" id="CH236949">
    <property type="protein sequence ID" value="EAL24192.1"/>
    <property type="status" value="ALT_SEQ"/>
    <property type="molecule type" value="Genomic_DNA"/>
</dbReference>
<dbReference type="EMBL" id="CH236949">
    <property type="protein sequence ID" value="EAL24193.1"/>
    <property type="status" value="ALT_SEQ"/>
    <property type="molecule type" value="Genomic_DNA"/>
</dbReference>
<dbReference type="EMBL" id="CH471091">
    <property type="protein sequence ID" value="EAW77007.1"/>
    <property type="molecule type" value="Genomic_DNA"/>
</dbReference>
<dbReference type="EMBL" id="BC147016">
    <property type="protein sequence ID" value="AAI47017.1"/>
    <property type="molecule type" value="mRNA"/>
</dbReference>
<dbReference type="EMBL" id="BC147017">
    <property type="protein sequence ID" value="AAI47018.1"/>
    <property type="molecule type" value="mRNA"/>
</dbReference>
<dbReference type="CCDS" id="CCDS47625.1"/>
<dbReference type="RefSeq" id="NP_001095856.1">
    <property type="nucleotide sequence ID" value="NM_001102386.3"/>
</dbReference>
<dbReference type="PDB" id="8RQL">
    <property type="method" value="EM"/>
    <property type="resolution" value="3.03 A"/>
    <property type="chains" value="A=1-57, A=181-354"/>
</dbReference>
<dbReference type="PDB" id="8VY9">
    <property type="method" value="EM"/>
    <property type="resolution" value="2.88 A"/>
    <property type="chains" value="A=1-354"/>
</dbReference>
<dbReference type="PDB" id="8XQP">
    <property type="method" value="EM"/>
    <property type="resolution" value="3.29 A"/>
    <property type="chains" value="A=1-354"/>
</dbReference>
<dbReference type="PDB" id="8YKY">
    <property type="method" value="EM"/>
    <property type="resolution" value="2.99 A"/>
    <property type="chains" value="A=1-354"/>
</dbReference>
<dbReference type="PDBsum" id="8RQL"/>
<dbReference type="PDBsum" id="8VY9"/>
<dbReference type="PDBsum" id="8XQP"/>
<dbReference type="PDBsum" id="8YKY"/>
<dbReference type="EMDB" id="EMD-19445"/>
<dbReference type="EMDB" id="EMD-27806"/>
<dbReference type="EMDB" id="EMD-38584"/>
<dbReference type="EMDB" id="EMD-39376"/>
<dbReference type="EMDB" id="EMD-43650"/>
<dbReference type="SMR" id="A8MTJ3"/>
<dbReference type="BioGRID" id="131390">
    <property type="interactions" value="17"/>
</dbReference>
<dbReference type="FunCoup" id="A8MTJ3">
    <property type="interactions" value="281"/>
</dbReference>
<dbReference type="IntAct" id="A8MTJ3">
    <property type="interactions" value="6"/>
</dbReference>
<dbReference type="STRING" id="9606.ENSP00000381339"/>
<dbReference type="GlyCosmos" id="A8MTJ3">
    <property type="glycosylation" value="2 sites, 1 glycan"/>
</dbReference>
<dbReference type="GlyGen" id="A8MTJ3">
    <property type="glycosylation" value="2 sites, 1 O-linked glycan (2 sites)"/>
</dbReference>
<dbReference type="iPTMnet" id="A8MTJ3"/>
<dbReference type="PhosphoSitePlus" id="A8MTJ3"/>
<dbReference type="SwissPalm" id="A8MTJ3"/>
<dbReference type="BioMuta" id="GNAT3"/>
<dbReference type="jPOST" id="A8MTJ3"/>
<dbReference type="MassIVE" id="A8MTJ3"/>
<dbReference type="PaxDb" id="9606-ENSP00000381339"/>
<dbReference type="PeptideAtlas" id="A8MTJ3"/>
<dbReference type="ProteomicsDB" id="2028"/>
<dbReference type="TopDownProteomics" id="A8MTJ3"/>
<dbReference type="Antibodypedia" id="29521">
    <property type="antibodies" value="149 antibodies from 29 providers"/>
</dbReference>
<dbReference type="DNASU" id="346562"/>
<dbReference type="Ensembl" id="ENST00000398291.4">
    <property type="protein sequence ID" value="ENSP00000381339.3"/>
    <property type="gene ID" value="ENSG00000214415.4"/>
</dbReference>
<dbReference type="GeneID" id="346562"/>
<dbReference type="KEGG" id="hsa:346562"/>
<dbReference type="MANE-Select" id="ENST00000398291.4">
    <property type="protein sequence ID" value="ENSP00000381339.3"/>
    <property type="RefSeq nucleotide sequence ID" value="NM_001102386.3"/>
    <property type="RefSeq protein sequence ID" value="NP_001095856.1"/>
</dbReference>
<dbReference type="UCSC" id="uc011kgu.3">
    <property type="organism name" value="human"/>
</dbReference>
<dbReference type="AGR" id="HGNC:22800"/>
<dbReference type="CTD" id="346562"/>
<dbReference type="DisGeNET" id="346562"/>
<dbReference type="GeneCards" id="GNAT3"/>
<dbReference type="HGNC" id="HGNC:22800">
    <property type="gene designation" value="GNAT3"/>
</dbReference>
<dbReference type="HPA" id="ENSG00000214415">
    <property type="expression patterns" value="Tissue enriched (intestine)"/>
</dbReference>
<dbReference type="MIM" id="139395">
    <property type="type" value="gene"/>
</dbReference>
<dbReference type="neXtProt" id="NX_A8MTJ3"/>
<dbReference type="OpenTargets" id="ENSG00000214415"/>
<dbReference type="PharmGKB" id="PA134931156"/>
<dbReference type="VEuPathDB" id="HostDB:ENSG00000214415"/>
<dbReference type="eggNOG" id="KOG0082">
    <property type="taxonomic scope" value="Eukaryota"/>
</dbReference>
<dbReference type="GeneTree" id="ENSGT00940000161422"/>
<dbReference type="HOGENOM" id="CLU_014184_6_0_1"/>
<dbReference type="InParanoid" id="A8MTJ3"/>
<dbReference type="OMA" id="EDQRQLC"/>
<dbReference type="OrthoDB" id="5817230at2759"/>
<dbReference type="PAN-GO" id="A8MTJ3">
    <property type="GO annotations" value="9 GO annotations based on evolutionary models"/>
</dbReference>
<dbReference type="PhylomeDB" id="A8MTJ3"/>
<dbReference type="TreeFam" id="TF300673"/>
<dbReference type="PathwayCommons" id="A8MTJ3"/>
<dbReference type="Reactome" id="R-HSA-170670">
    <property type="pathway name" value="Adenylate cyclase inhibitory pathway"/>
</dbReference>
<dbReference type="Reactome" id="R-HSA-381771">
    <property type="pathway name" value="Synthesis, secretion, and inactivation of Glucagon-like Peptide-1 (GLP-1)"/>
</dbReference>
<dbReference type="Reactome" id="R-HSA-392170">
    <property type="pathway name" value="ADP signalling through P2Y purinoceptor 12"/>
</dbReference>
<dbReference type="Reactome" id="R-HSA-418555">
    <property type="pathway name" value="G alpha (s) signalling events"/>
</dbReference>
<dbReference type="Reactome" id="R-HSA-418594">
    <property type="pathway name" value="G alpha (i) signalling events"/>
</dbReference>
<dbReference type="Reactome" id="R-HSA-418597">
    <property type="pathway name" value="G alpha (z) signalling events"/>
</dbReference>
<dbReference type="Reactome" id="R-HSA-9009391">
    <property type="pathway name" value="Extra-nuclear estrogen signaling"/>
</dbReference>
<dbReference type="Reactome" id="R-HSA-9634597">
    <property type="pathway name" value="GPER1 signaling"/>
</dbReference>
<dbReference type="Reactome" id="R-HSA-9660821">
    <property type="pathway name" value="ADORA2B mediated anti-inflammatory cytokines production"/>
</dbReference>
<dbReference type="Reactome" id="R-HSA-9717207">
    <property type="pathway name" value="Sensory perception of sweet, bitter, and umami (glutamate) taste"/>
</dbReference>
<dbReference type="SignaLink" id="A8MTJ3"/>
<dbReference type="BioGRID-ORCS" id="346562">
    <property type="hits" value="13 hits in 1144 CRISPR screens"/>
</dbReference>
<dbReference type="ChiTaRS" id="GNAT3">
    <property type="organism name" value="human"/>
</dbReference>
<dbReference type="GeneWiki" id="GNAT3"/>
<dbReference type="GenomeRNAi" id="346562"/>
<dbReference type="Pharos" id="A8MTJ3">
    <property type="development level" value="Tbio"/>
</dbReference>
<dbReference type="PRO" id="PR:A8MTJ3"/>
<dbReference type="Proteomes" id="UP000005640">
    <property type="component" value="Chromosome 7"/>
</dbReference>
<dbReference type="RNAct" id="A8MTJ3">
    <property type="molecule type" value="protein"/>
</dbReference>
<dbReference type="Bgee" id="ENSG00000214415">
    <property type="expression patterns" value="Expressed in male germ line stem cell (sensu Vertebrata) in testis and 13 other cell types or tissues"/>
</dbReference>
<dbReference type="GO" id="GO:0001669">
    <property type="term" value="C:acrosomal vesicle"/>
    <property type="evidence" value="ECO:0007669"/>
    <property type="project" value="Ensembl"/>
</dbReference>
<dbReference type="GO" id="GO:0016324">
    <property type="term" value="C:apical plasma membrane"/>
    <property type="evidence" value="ECO:0007669"/>
    <property type="project" value="Ensembl"/>
</dbReference>
<dbReference type="GO" id="GO:0005930">
    <property type="term" value="C:axoneme"/>
    <property type="evidence" value="ECO:0007669"/>
    <property type="project" value="Ensembl"/>
</dbReference>
<dbReference type="GO" id="GO:0005737">
    <property type="term" value="C:cytoplasm"/>
    <property type="evidence" value="ECO:0000318"/>
    <property type="project" value="GO_Central"/>
</dbReference>
<dbReference type="GO" id="GO:0005834">
    <property type="term" value="C:heterotrimeric G-protein complex"/>
    <property type="evidence" value="ECO:0000318"/>
    <property type="project" value="GO_Central"/>
</dbReference>
<dbReference type="GO" id="GO:0005886">
    <property type="term" value="C:plasma membrane"/>
    <property type="evidence" value="ECO:0000304"/>
    <property type="project" value="Reactome"/>
</dbReference>
<dbReference type="GO" id="GO:0032991">
    <property type="term" value="C:protein-containing complex"/>
    <property type="evidence" value="ECO:0000314"/>
    <property type="project" value="MGI"/>
</dbReference>
<dbReference type="GO" id="GO:0001664">
    <property type="term" value="F:G protein-coupled receptor binding"/>
    <property type="evidence" value="ECO:0000318"/>
    <property type="project" value="GO_Central"/>
</dbReference>
<dbReference type="GO" id="GO:0031683">
    <property type="term" value="F:G-protein beta/gamma-subunit complex binding"/>
    <property type="evidence" value="ECO:0000318"/>
    <property type="project" value="GO_Central"/>
</dbReference>
<dbReference type="GO" id="GO:0005525">
    <property type="term" value="F:GTP binding"/>
    <property type="evidence" value="ECO:0007669"/>
    <property type="project" value="UniProtKB-KW"/>
</dbReference>
<dbReference type="GO" id="GO:0003924">
    <property type="term" value="F:GTPase activity"/>
    <property type="evidence" value="ECO:0000318"/>
    <property type="project" value="GO_Central"/>
</dbReference>
<dbReference type="GO" id="GO:0046872">
    <property type="term" value="F:metal ion binding"/>
    <property type="evidence" value="ECO:0007669"/>
    <property type="project" value="UniProtKB-KW"/>
</dbReference>
<dbReference type="GO" id="GO:0007188">
    <property type="term" value="P:adenylate cyclase-modulating G protein-coupled receptor signaling pathway"/>
    <property type="evidence" value="ECO:0000318"/>
    <property type="project" value="GO_Central"/>
</dbReference>
<dbReference type="GO" id="GO:0050908">
    <property type="term" value="P:detection of light stimulus involved in visual perception"/>
    <property type="evidence" value="ECO:0000318"/>
    <property type="project" value="GO_Central"/>
</dbReference>
<dbReference type="GO" id="GO:0007603">
    <property type="term" value="P:phototransduction, visible light"/>
    <property type="evidence" value="ECO:0000318"/>
    <property type="project" value="GO_Central"/>
</dbReference>
<dbReference type="GO" id="GO:0035094">
    <property type="term" value="P:response to nicotine"/>
    <property type="evidence" value="ECO:0007669"/>
    <property type="project" value="Ensembl"/>
</dbReference>
<dbReference type="GO" id="GO:0050913">
    <property type="term" value="P:sensory perception of bitter taste"/>
    <property type="evidence" value="ECO:0007669"/>
    <property type="project" value="Ensembl"/>
</dbReference>
<dbReference type="GO" id="GO:0050916">
    <property type="term" value="P:sensory perception of sweet taste"/>
    <property type="evidence" value="ECO:0000318"/>
    <property type="project" value="GO_Central"/>
</dbReference>
<dbReference type="GO" id="GO:0050917">
    <property type="term" value="P:sensory perception of umami taste"/>
    <property type="evidence" value="ECO:0007669"/>
    <property type="project" value="Ensembl"/>
</dbReference>
<dbReference type="CDD" id="cd00066">
    <property type="entry name" value="G-alpha"/>
    <property type="match status" value="1"/>
</dbReference>
<dbReference type="FunFam" id="1.10.400.10:FF:000001">
    <property type="entry name" value="Guanine nucleotide-binding protein G(I) subunit alpha"/>
    <property type="match status" value="1"/>
</dbReference>
<dbReference type="FunFam" id="3.40.50.300:FF:000720">
    <property type="entry name" value="Guanine nucleotide-binding protein G(k) subunit alpha"/>
    <property type="match status" value="1"/>
</dbReference>
<dbReference type="FunFam" id="3.40.50.300:FF:000256">
    <property type="entry name" value="Guanine nucleotide-binding protein G(t) subunit alpha"/>
    <property type="match status" value="1"/>
</dbReference>
<dbReference type="Gene3D" id="1.10.400.10">
    <property type="entry name" value="GI Alpha 1, domain 2-like"/>
    <property type="match status" value="1"/>
</dbReference>
<dbReference type="Gene3D" id="3.40.50.300">
    <property type="entry name" value="P-loop containing nucleotide triphosphate hydrolases"/>
    <property type="match status" value="1"/>
</dbReference>
<dbReference type="InterPro" id="IPR001408">
    <property type="entry name" value="Gprotein_alpha_I"/>
</dbReference>
<dbReference type="InterPro" id="IPR001019">
    <property type="entry name" value="Gprotein_alpha_su"/>
</dbReference>
<dbReference type="InterPro" id="IPR011025">
    <property type="entry name" value="GproteinA_insert"/>
</dbReference>
<dbReference type="InterPro" id="IPR027417">
    <property type="entry name" value="P-loop_NTPase"/>
</dbReference>
<dbReference type="PANTHER" id="PTHR10218">
    <property type="entry name" value="GTP-BINDING PROTEIN ALPHA SUBUNIT"/>
    <property type="match status" value="1"/>
</dbReference>
<dbReference type="PANTHER" id="PTHR10218:SF66">
    <property type="entry name" value="GUANINE NUCLEOTIDE-BINDING PROTEIN G(T) SUBUNIT ALPHA-3"/>
    <property type="match status" value="1"/>
</dbReference>
<dbReference type="Pfam" id="PF00503">
    <property type="entry name" value="G-alpha"/>
    <property type="match status" value="1"/>
</dbReference>
<dbReference type="PRINTS" id="PR00318">
    <property type="entry name" value="GPROTEINA"/>
</dbReference>
<dbReference type="PRINTS" id="PR00441">
    <property type="entry name" value="GPROTEINAI"/>
</dbReference>
<dbReference type="SMART" id="SM00275">
    <property type="entry name" value="G_alpha"/>
    <property type="match status" value="1"/>
</dbReference>
<dbReference type="SUPFAM" id="SSF52540">
    <property type="entry name" value="P-loop containing nucleoside triphosphate hydrolases"/>
    <property type="match status" value="1"/>
</dbReference>
<dbReference type="SUPFAM" id="SSF47895">
    <property type="entry name" value="Transducin (alpha subunit), insertion domain"/>
    <property type="match status" value="1"/>
</dbReference>
<dbReference type="PROSITE" id="PS51882">
    <property type="entry name" value="G_ALPHA"/>
    <property type="match status" value="1"/>
</dbReference>
<keyword id="KW-0002">3D-structure</keyword>
<keyword id="KW-0963">Cytoplasm</keyword>
<keyword id="KW-0342">GTP-binding</keyword>
<keyword id="KW-0449">Lipoprotein</keyword>
<keyword id="KW-0460">Magnesium</keyword>
<keyword id="KW-0479">Metal-binding</keyword>
<keyword id="KW-0519">Myristate</keyword>
<keyword id="KW-0547">Nucleotide-binding</keyword>
<keyword id="KW-1267">Proteomics identification</keyword>
<keyword id="KW-1185">Reference proteome</keyword>
<keyword id="KW-0807">Transducer</keyword>
<feature type="initiator methionine" description="Removed">
    <location>
        <position position="1"/>
    </location>
</feature>
<feature type="chain" id="PRO_0000342671" description="Guanine nucleotide-binding protein G(t) subunit alpha-3">
    <location>
        <begin position="2"/>
        <end position="354"/>
    </location>
</feature>
<feature type="domain" description="G-alpha" evidence="3">
    <location>
        <begin position="32"/>
        <end position="354"/>
    </location>
</feature>
<feature type="region of interest" description="Disordered" evidence="4">
    <location>
        <begin position="1"/>
        <end position="27"/>
    </location>
</feature>
<feature type="region of interest" description="G1 motif" evidence="3">
    <location>
        <begin position="35"/>
        <end position="48"/>
    </location>
</feature>
<feature type="region of interest" description="G2 motif" evidence="3">
    <location>
        <begin position="173"/>
        <end position="181"/>
    </location>
</feature>
<feature type="region of interest" description="G3 motif" evidence="3">
    <location>
        <begin position="196"/>
        <end position="205"/>
    </location>
</feature>
<feature type="region of interest" description="G4 motif" evidence="3">
    <location>
        <begin position="265"/>
        <end position="272"/>
    </location>
</feature>
<feature type="region of interest" description="G5 motif" evidence="3">
    <location>
        <begin position="324"/>
        <end position="329"/>
    </location>
</feature>
<feature type="compositionally biased region" description="Basic and acidic residues" evidence="4">
    <location>
        <begin position="8"/>
        <end position="27"/>
    </location>
</feature>
<feature type="binding site" evidence="1">
    <location>
        <begin position="40"/>
        <end position="47"/>
    </location>
    <ligand>
        <name>GTP</name>
        <dbReference type="ChEBI" id="CHEBI:37565"/>
    </ligand>
</feature>
<feature type="binding site" evidence="1">
    <location>
        <position position="47"/>
    </location>
    <ligand>
        <name>Mg(2+)</name>
        <dbReference type="ChEBI" id="CHEBI:18420"/>
    </ligand>
</feature>
<feature type="binding site" evidence="1">
    <location>
        <begin position="175"/>
        <end position="181"/>
    </location>
    <ligand>
        <name>GTP</name>
        <dbReference type="ChEBI" id="CHEBI:37565"/>
    </ligand>
</feature>
<feature type="binding site" evidence="1">
    <location>
        <position position="181"/>
    </location>
    <ligand>
        <name>Mg(2+)</name>
        <dbReference type="ChEBI" id="CHEBI:18420"/>
    </ligand>
</feature>
<feature type="binding site" evidence="1">
    <location>
        <begin position="200"/>
        <end position="204"/>
    </location>
    <ligand>
        <name>GTP</name>
        <dbReference type="ChEBI" id="CHEBI:37565"/>
    </ligand>
</feature>
<feature type="binding site" evidence="1">
    <location>
        <begin position="269"/>
        <end position="272"/>
    </location>
    <ligand>
        <name>GTP</name>
        <dbReference type="ChEBI" id="CHEBI:37565"/>
    </ligand>
</feature>
<feature type="binding site" evidence="1">
    <location>
        <position position="326"/>
    </location>
    <ligand>
        <name>GTP</name>
        <dbReference type="ChEBI" id="CHEBI:37565"/>
    </ligand>
</feature>
<feature type="lipid moiety-binding region" description="N-myristoyl glycine" evidence="1">
    <location>
        <position position="2"/>
    </location>
</feature>
<feature type="helix" evidence="17">
    <location>
        <begin position="7"/>
        <end position="31"/>
    </location>
</feature>
<feature type="strand" evidence="17">
    <location>
        <begin position="35"/>
        <end position="38"/>
    </location>
</feature>
<feature type="strand" evidence="17">
    <location>
        <begin position="49"/>
        <end position="52"/>
    </location>
</feature>
<feature type="strand" evidence="17">
    <location>
        <begin position="185"/>
        <end position="190"/>
    </location>
</feature>
<feature type="strand" evidence="17">
    <location>
        <begin position="195"/>
        <end position="200"/>
    </location>
</feature>
<feature type="strand" evidence="17">
    <location>
        <begin position="209"/>
        <end position="211"/>
    </location>
</feature>
<feature type="helix" evidence="17">
    <location>
        <begin position="212"/>
        <end position="216"/>
    </location>
</feature>
<feature type="strand" evidence="17">
    <location>
        <begin position="219"/>
        <end position="221"/>
    </location>
</feature>
<feature type="strand" evidence="17">
    <location>
        <begin position="224"/>
        <end position="226"/>
    </location>
</feature>
<feature type="helix" evidence="18">
    <location>
        <begin position="227"/>
        <end position="230"/>
    </location>
</feature>
<feature type="helix" evidence="17">
    <location>
        <begin position="241"/>
        <end position="254"/>
    </location>
</feature>
<feature type="helix" evidence="17">
    <location>
        <begin position="258"/>
        <end position="260"/>
    </location>
</feature>
<feature type="strand" evidence="17">
    <location>
        <begin position="261"/>
        <end position="263"/>
    </location>
</feature>
<feature type="strand" evidence="17">
    <location>
        <begin position="265"/>
        <end position="269"/>
    </location>
</feature>
<feature type="helix" evidence="17">
    <location>
        <begin position="271"/>
        <end position="280"/>
    </location>
</feature>
<feature type="helix" evidence="17">
    <location>
        <begin position="283"/>
        <end position="286"/>
    </location>
</feature>
<feature type="helix" evidence="17">
    <location>
        <begin position="296"/>
        <end position="309"/>
    </location>
</feature>
<feature type="turn" evidence="17">
    <location>
        <begin position="314"/>
        <end position="316"/>
    </location>
</feature>
<feature type="strand" evidence="17">
    <location>
        <begin position="320"/>
        <end position="322"/>
    </location>
</feature>
<feature type="helix" evidence="17">
    <location>
        <begin position="331"/>
        <end position="351"/>
    </location>
</feature>
<evidence type="ECO:0000250" key="1"/>
<evidence type="ECO:0000250" key="2">
    <source>
        <dbReference type="UniProtKB" id="Q3V3I2"/>
    </source>
</evidence>
<evidence type="ECO:0000255" key="3">
    <source>
        <dbReference type="PROSITE-ProRule" id="PRU01230"/>
    </source>
</evidence>
<evidence type="ECO:0000256" key="4">
    <source>
        <dbReference type="SAM" id="MobiDB-lite"/>
    </source>
</evidence>
<evidence type="ECO:0000269" key="5">
    <source>
    </source>
</evidence>
<evidence type="ECO:0000269" key="6">
    <source>
    </source>
</evidence>
<evidence type="ECO:0000269" key="7">
    <source>
    </source>
</evidence>
<evidence type="ECO:0000269" key="8">
    <source>
    </source>
</evidence>
<evidence type="ECO:0000269" key="9">
    <source>
    </source>
</evidence>
<evidence type="ECO:0000269" key="10">
    <source>
    </source>
</evidence>
<evidence type="ECO:0000269" key="11">
    <source>
    </source>
</evidence>
<evidence type="ECO:0000269" key="12">
    <source>
    </source>
</evidence>
<evidence type="ECO:0000305" key="13"/>
<evidence type="ECO:0007744" key="14">
    <source>
        <dbReference type="PDB" id="8VY9"/>
    </source>
</evidence>
<evidence type="ECO:0007744" key="15">
    <source>
        <dbReference type="PDB" id="8XQP"/>
    </source>
</evidence>
<evidence type="ECO:0007744" key="16">
    <source>
        <dbReference type="PDB" id="8YKY"/>
    </source>
</evidence>
<evidence type="ECO:0007829" key="17">
    <source>
        <dbReference type="PDB" id="8RQL"/>
    </source>
</evidence>
<evidence type="ECO:0007829" key="18">
    <source>
        <dbReference type="PDB" id="8XQP"/>
    </source>
</evidence>
<accession>A8MTJ3</accession>
<accession>A4D1B2</accession>
<accession>A4D1B3</accession>
<accession>B9EJG5</accession>
<reference key="1">
    <citation type="journal article" date="2003" name="Nature">
        <title>The DNA sequence of human chromosome 7.</title>
        <authorList>
            <person name="Hillier L.W."/>
            <person name="Fulton R.S."/>
            <person name="Fulton L.A."/>
            <person name="Graves T.A."/>
            <person name="Pepin K.H."/>
            <person name="Wagner-McPherson C."/>
            <person name="Layman D."/>
            <person name="Maas J."/>
            <person name="Jaeger S."/>
            <person name="Walker R."/>
            <person name="Wylie K."/>
            <person name="Sekhon M."/>
            <person name="Becker M.C."/>
            <person name="O'Laughlin M.D."/>
            <person name="Schaller M.E."/>
            <person name="Fewell G.A."/>
            <person name="Delehaunty K.D."/>
            <person name="Miner T.L."/>
            <person name="Nash W.E."/>
            <person name="Cordes M."/>
            <person name="Du H."/>
            <person name="Sun H."/>
            <person name="Edwards J."/>
            <person name="Bradshaw-Cordum H."/>
            <person name="Ali J."/>
            <person name="Andrews S."/>
            <person name="Isak A."/>
            <person name="Vanbrunt A."/>
            <person name="Nguyen C."/>
            <person name="Du F."/>
            <person name="Lamar B."/>
            <person name="Courtney L."/>
            <person name="Kalicki J."/>
            <person name="Ozersky P."/>
            <person name="Bielicki L."/>
            <person name="Scott K."/>
            <person name="Holmes A."/>
            <person name="Harkins R."/>
            <person name="Harris A."/>
            <person name="Strong C.M."/>
            <person name="Hou S."/>
            <person name="Tomlinson C."/>
            <person name="Dauphin-Kohlberg S."/>
            <person name="Kozlowicz-Reilly A."/>
            <person name="Leonard S."/>
            <person name="Rohlfing T."/>
            <person name="Rock S.M."/>
            <person name="Tin-Wollam A.-M."/>
            <person name="Abbott A."/>
            <person name="Minx P."/>
            <person name="Maupin R."/>
            <person name="Strowmatt C."/>
            <person name="Latreille P."/>
            <person name="Miller N."/>
            <person name="Johnson D."/>
            <person name="Murray J."/>
            <person name="Woessner J.P."/>
            <person name="Wendl M.C."/>
            <person name="Yang S.-P."/>
            <person name="Schultz B.R."/>
            <person name="Wallis J.W."/>
            <person name="Spieth J."/>
            <person name="Bieri T.A."/>
            <person name="Nelson J.O."/>
            <person name="Berkowicz N."/>
            <person name="Wohldmann P.E."/>
            <person name="Cook L.L."/>
            <person name="Hickenbotham M.T."/>
            <person name="Eldred J."/>
            <person name="Williams D."/>
            <person name="Bedell J.A."/>
            <person name="Mardis E.R."/>
            <person name="Clifton S.W."/>
            <person name="Chissoe S.L."/>
            <person name="Marra M.A."/>
            <person name="Raymond C."/>
            <person name="Haugen E."/>
            <person name="Gillett W."/>
            <person name="Zhou Y."/>
            <person name="James R."/>
            <person name="Phelps K."/>
            <person name="Iadanoto S."/>
            <person name="Bubb K."/>
            <person name="Simms E."/>
            <person name="Levy R."/>
            <person name="Clendenning J."/>
            <person name="Kaul R."/>
            <person name="Kent W.J."/>
            <person name="Furey T.S."/>
            <person name="Baertsch R.A."/>
            <person name="Brent M.R."/>
            <person name="Keibler E."/>
            <person name="Flicek P."/>
            <person name="Bork P."/>
            <person name="Suyama M."/>
            <person name="Bailey J.A."/>
            <person name="Portnoy M.E."/>
            <person name="Torrents D."/>
            <person name="Chinwalla A.T."/>
            <person name="Gish W.R."/>
            <person name="Eddy S.R."/>
            <person name="McPherson J.D."/>
            <person name="Olson M.V."/>
            <person name="Eichler E.E."/>
            <person name="Green E.D."/>
            <person name="Waterston R.H."/>
            <person name="Wilson R.K."/>
        </authorList>
    </citation>
    <scope>NUCLEOTIDE SEQUENCE [LARGE SCALE GENOMIC DNA]</scope>
</reference>
<reference key="2">
    <citation type="submission" date="2005-09" db="EMBL/GenBank/DDBJ databases">
        <authorList>
            <person name="Mural R.J."/>
            <person name="Istrail S."/>
            <person name="Sutton G.G."/>
            <person name="Florea L."/>
            <person name="Halpern A.L."/>
            <person name="Mobarry C.M."/>
            <person name="Lippert R."/>
            <person name="Walenz B."/>
            <person name="Shatkay H."/>
            <person name="Dew I."/>
            <person name="Miller J.R."/>
            <person name="Flanigan M.J."/>
            <person name="Edwards N.J."/>
            <person name="Bolanos R."/>
            <person name="Fasulo D."/>
            <person name="Halldorsson B.V."/>
            <person name="Hannenhalli S."/>
            <person name="Turner R."/>
            <person name="Yooseph S."/>
            <person name="Lu F."/>
            <person name="Nusskern D.R."/>
            <person name="Shue B.C."/>
            <person name="Zheng X.H."/>
            <person name="Zhong F."/>
            <person name="Delcher A.L."/>
            <person name="Huson D.H."/>
            <person name="Kravitz S.A."/>
            <person name="Mouchard L."/>
            <person name="Reinert K."/>
            <person name="Remington K.A."/>
            <person name="Clark A.G."/>
            <person name="Waterman M.S."/>
            <person name="Eichler E.E."/>
            <person name="Adams M.D."/>
            <person name="Hunkapiller M.W."/>
            <person name="Myers E.W."/>
            <person name="Venter J.C."/>
        </authorList>
    </citation>
    <scope>NUCLEOTIDE SEQUENCE [LARGE SCALE GENOMIC DNA]</scope>
</reference>
<reference key="3">
    <citation type="journal article" date="2003" name="Science">
        <title>Human chromosome 7: DNA sequence and biology.</title>
        <authorList>
            <person name="Scherer S.W."/>
            <person name="Cheung J."/>
            <person name="MacDonald J.R."/>
            <person name="Osborne L.R."/>
            <person name="Nakabayashi K."/>
            <person name="Herbrick J.-A."/>
            <person name="Carson A.R."/>
            <person name="Parker-Katiraee L."/>
            <person name="Skaug J."/>
            <person name="Khaja R."/>
            <person name="Zhang J."/>
            <person name="Hudek A.K."/>
            <person name="Li M."/>
            <person name="Haddad M."/>
            <person name="Duggan G.E."/>
            <person name="Fernandez B.A."/>
            <person name="Kanematsu E."/>
            <person name="Gentles S."/>
            <person name="Christopoulos C.C."/>
            <person name="Choufani S."/>
            <person name="Kwasnicka D."/>
            <person name="Zheng X.H."/>
            <person name="Lai Z."/>
            <person name="Nusskern D.R."/>
            <person name="Zhang Q."/>
            <person name="Gu Z."/>
            <person name="Lu F."/>
            <person name="Zeesman S."/>
            <person name="Nowaczyk M.J."/>
            <person name="Teshima I."/>
            <person name="Chitayat D."/>
            <person name="Shuman C."/>
            <person name="Weksberg R."/>
            <person name="Zackai E.H."/>
            <person name="Grebe T.A."/>
            <person name="Cox S.R."/>
            <person name="Kirkpatrick S.J."/>
            <person name="Rahman N."/>
            <person name="Friedman J.M."/>
            <person name="Heng H.H.Q."/>
            <person name="Pelicci P.G."/>
            <person name="Lo-Coco F."/>
            <person name="Belloni E."/>
            <person name="Shaffer L.G."/>
            <person name="Pober B."/>
            <person name="Morton C.C."/>
            <person name="Gusella J.F."/>
            <person name="Bruns G.A.P."/>
            <person name="Korf B.R."/>
            <person name="Quade B.J."/>
            <person name="Ligon A.H."/>
            <person name="Ferguson H."/>
            <person name="Higgins A.W."/>
            <person name="Leach N.T."/>
            <person name="Herrick S.R."/>
            <person name="Lemyre E."/>
            <person name="Farra C.G."/>
            <person name="Kim H.-G."/>
            <person name="Summers A.M."/>
            <person name="Gripp K.W."/>
            <person name="Roberts W."/>
            <person name="Szatmari P."/>
            <person name="Winsor E.J.T."/>
            <person name="Grzeschik K.-H."/>
            <person name="Teebi A."/>
            <person name="Minassian B.A."/>
            <person name="Kere J."/>
            <person name="Armengol L."/>
            <person name="Pujana M.A."/>
            <person name="Estivill X."/>
            <person name="Wilson M.D."/>
            <person name="Koop B.F."/>
            <person name="Tosi S."/>
            <person name="Moore G.E."/>
            <person name="Boright A.P."/>
            <person name="Zlotorynski E."/>
            <person name="Kerem B."/>
            <person name="Kroisel P.M."/>
            <person name="Petek E."/>
            <person name="Oscier D.G."/>
            <person name="Mould S.J."/>
            <person name="Doehner H."/>
            <person name="Doehner K."/>
            <person name="Rommens J.M."/>
            <person name="Vincent J.B."/>
            <person name="Venter J.C."/>
            <person name="Li P.W."/>
            <person name="Mural R.J."/>
            <person name="Adams M.D."/>
            <person name="Tsui L.-C."/>
        </authorList>
    </citation>
    <scope>NUCLEOTIDE SEQUENCE [LARGE SCALE GENOMIC DNA]</scope>
</reference>
<reference key="4">
    <citation type="journal article" date="2004" name="Genome Res.">
        <title>The status, quality, and expansion of the NIH full-length cDNA project: the Mammalian Gene Collection (MGC).</title>
        <authorList>
            <consortium name="The MGC Project Team"/>
        </authorList>
    </citation>
    <scope>NUCLEOTIDE SEQUENCE [LARGE SCALE MRNA]</scope>
</reference>
<reference key="5">
    <citation type="journal article" date="1994" name="Brain Res. Mol. Brain Res.">
        <title>Human taste cells express the G protein alpha-gustducin and neuron-specific enolase.</title>
        <authorList>
            <person name="Takami S."/>
            <person name="Getchell T.V."/>
            <person name="McLaughlin S.K."/>
            <person name="Margolskee R.F."/>
            <person name="Getchell M.L."/>
        </authorList>
    </citation>
    <scope>TISSUE SPECIFICITY</scope>
    <scope>SUBCELLULAR LOCATION</scope>
</reference>
<reference key="6">
    <citation type="journal article" date="2002" name="Proc. Natl. Acad. Sci. U.S.A.">
        <title>Human receptors for sweet and umami taste.</title>
        <authorList>
            <person name="Li X."/>
            <person name="Staszewski L."/>
            <person name="Xu H."/>
            <person name="Durick K."/>
            <person name="Zoller M."/>
            <person name="Adler E."/>
        </authorList>
    </citation>
    <scope>FUNCTION</scope>
</reference>
<reference key="7">
    <citation type="journal article" date="2006" name="Am. J. Physiol.">
        <title>Colocalization of the alpha-subunit of gustducin with PYY and GLP-1 in L cells of human colon.</title>
        <authorList>
            <person name="Rozengurt N."/>
            <person name="Wu S.V."/>
            <person name="Chen M.C."/>
            <person name="Huang C."/>
            <person name="Sternini C."/>
            <person name="Rozengurt E."/>
        </authorList>
    </citation>
    <scope>TISSUE SPECIFICITY</scope>
</reference>
<reference key="8">
    <citation type="journal article" date="2007" name="J. Comp. Physiol. A">
        <title>Expression of the G-protein alpha-subunit gustducin in mammalian spermatozoa.</title>
        <authorList>
            <person name="Fehr J."/>
            <person name="Meyer D."/>
            <person name="Widmayer P."/>
            <person name="Borth H.C."/>
            <person name="Ackermann F."/>
            <person name="Wilhelm B."/>
            <person name="Gudermann T."/>
            <person name="Boekhoff I."/>
        </authorList>
    </citation>
    <scope>TISSUE SPECIFICITY</scope>
</reference>
<reference key="9">
    <citation type="journal article" date="2007" name="Proc. Natl. Acad. Sci. U.S.A.">
        <title>Gut-expressed gustducin and taste receptors regulate secretion of glucagon-like peptide-1.</title>
        <authorList>
            <person name="Jang H.-J."/>
            <person name="Kokrashvili Z."/>
            <person name="Theodorakis M.J."/>
            <person name="Carlson O.D."/>
            <person name="Kim B.-J."/>
            <person name="Zhou J."/>
            <person name="Kim H.H."/>
            <person name="Xu X."/>
            <person name="Chan S.L."/>
            <person name="Juhaszova M."/>
            <person name="Bernier M."/>
            <person name="Mosinger B."/>
            <person name="Margolskee R.F."/>
            <person name="Egan J.M."/>
        </authorList>
    </citation>
    <scope>FUNCTION</scope>
    <scope>SUBUNIT</scope>
</reference>
<reference key="10">
    <citation type="journal article" date="2007" name="Proc. Natl. Acad. Sci. U.S.A.">
        <title>T1R3 and gustducin in gut sense sugars to regulate expression of Na+-glucose cotransporter 1.</title>
        <authorList>
            <person name="Margolskee R.F."/>
            <person name="Dyer J."/>
            <person name="Kokrashvili Z."/>
            <person name="Salmon K.S."/>
            <person name="Ilegems E."/>
            <person name="Daly K."/>
            <person name="Maillet E.L."/>
            <person name="Ninomiya Y."/>
            <person name="Mosinger B."/>
            <person name="Shirazi-Beechey S.P."/>
        </authorList>
    </citation>
    <scope>TISSUE SPECIFICITY</scope>
</reference>
<reference evidence="14" key="11">
    <citation type="journal article" date="2024" name="Nature">
        <title>Bitter taste receptor activation by cholesterol and an intracellular tastant.</title>
        <authorList>
            <person name="Kim Y."/>
            <person name="Gumpper R.H."/>
            <person name="Liu Y."/>
            <person name="Kocak D.D."/>
            <person name="Xiong Y."/>
            <person name="Cao C."/>
            <person name="Deng Z."/>
            <person name="Krumm B.E."/>
            <person name="Jain M.K."/>
            <person name="Zhang S."/>
            <person name="Jin J."/>
            <person name="Roth B.L."/>
        </authorList>
    </citation>
    <scope>STRUCTURE BY ELECTRON MICROSCOPY (2.88 ANGSTROMS) OF MUTANT IN COMPLEXES WITH TAS2R14; G-PROTEINS; CHOLESTEROL AND AGONIST CMPD28.1</scope>
    <scope>FUNCTION</scope>
    <scope>SUBUNIT</scope>
</reference>
<reference evidence="15 16" key="12">
    <citation type="journal article" date="2024" name="Nature">
        <title>Bitter taste TAS2R14 activation by intracellular tastants and cholesterol.</title>
        <authorList>
            <person name="Hu X."/>
            <person name="Ao W."/>
            <person name="Gao M."/>
            <person name="Wu L."/>
            <person name="Pei Y."/>
            <person name="Liu S."/>
            <person name="Wu Y."/>
            <person name="Zhao F."/>
            <person name="Sun Q."/>
            <person name="Liu J."/>
            <person name="Jiang L."/>
            <person name="Wang X."/>
            <person name="Li Y."/>
            <person name="Tan Q."/>
            <person name="Cheng J."/>
            <person name="Yang F."/>
            <person name="Yang C."/>
            <person name="Sun J."/>
            <person name="Hua T."/>
            <person name="Liu Z.J."/>
        </authorList>
    </citation>
    <scope>STRUCTURE BY ELECTRON MICROSCOPY (2.99 ANGSTROMS) OF MUTANT ILE-265 IN COMPLEXES WITH G-PROTEINS; ARISTOLOCHIC ACID; FLUFENAMIC ACID AND AGONIST CMPD28.1</scope>
</reference>
<organism>
    <name type="scientific">Homo sapiens</name>
    <name type="common">Human</name>
    <dbReference type="NCBI Taxonomy" id="9606"/>
    <lineage>
        <taxon>Eukaryota</taxon>
        <taxon>Metazoa</taxon>
        <taxon>Chordata</taxon>
        <taxon>Craniata</taxon>
        <taxon>Vertebrata</taxon>
        <taxon>Euteleostomi</taxon>
        <taxon>Mammalia</taxon>
        <taxon>Eutheria</taxon>
        <taxon>Euarchontoglires</taxon>
        <taxon>Primates</taxon>
        <taxon>Haplorrhini</taxon>
        <taxon>Catarrhini</taxon>
        <taxon>Hominidae</taxon>
        <taxon>Homo</taxon>
    </lineage>
</organism>
<proteinExistence type="evidence at protein level"/>
<protein>
    <recommendedName>
        <fullName>Guanine nucleotide-binding protein G(t) subunit alpha-3</fullName>
    </recommendedName>
    <alternativeName>
        <fullName>Gustducin alpha-3 chain</fullName>
    </alternativeName>
</protein>
<sequence>MGSGISSESKESAKRSKELEKKLQEDAERDARTVKLLLLGAGESGKSTIVKQMKIIHKNGYSEQECMEFKAVIYSNTLQSILAIVKAMTTLGIDYVNPRSAEDQRQLYAMANTLEDGGMTPQLAEVIKRLWRDPGIQACFERASEYQLNDSAAYYLNDLDRITASGYVPNEQDVLHSRVKTTGIIETQFSFKDLHFRMFDVGGQRSERKKWIHCFEGVTCIIFCAALSAYDMVLVEDEEVNRMHESLHLFNSICNHKYFSTTSIVLFLNKKDIFQEKVTKVHLSICFPEYTGPNTFEDAGNYIKNQFLDLNLKKEDKEIYSHMTCATDTQNVKFVFDAVTDIIIKENLKDCGLF</sequence>
<comment type="function">
    <text evidence="5 8 10 11">Guanine nucleotide-binding protein (G protein) alpha subunit playing a prominent role in bitter and sweet taste transduction as well as in umami (monosodium glutamate, monopotassium glutamate, and inosine monophosphate) taste transduction (PubMed:38600377, PubMed:38776963). Transduction by this alpha subunit involves coupling of specific cell-surface receptors with a cGMP-phosphodiesterase; Activation of phosphodiesterase lowers intracellular levels of cAMP and cGMP which may open a cyclic nucleotide-suppressible cation channel leading to influx of calcium, ultimately leading to release of neurotransmitter. Indeed, denatonium and strychnine induce transient reduction in cAMP and cGMP in taste tissue, whereas this decrease is inhibited by GNAT3 antibody. Gustducin heterotrimer transduces response to bitter and sweet compounds via regulation of phosphodiesterase for alpha subunit, as well as via activation of phospholipase C for beta and gamma subunits, with ultimate increase inositol trisphosphate and increase of intracellular Calcium. GNAT3 can functionally couple to taste receptors to transmit intracellular signal: receptor heterodimer TAS1R2/TAS1R3 senses sweetness and TAS1R1/TAS1R3 transduces umami taste, whereas the T2R family GPCRs such as TAS2R14 act as bitter sensors (PubMed:38600377, PubMed:38776963). Also functions as lumenal sugar sensors in the gut to control the expression of the Na+-glucose transporter SGLT1 in response to dietaty sugar, as well as the secretion of Glucagon-like peptide-1, GLP-1 and glucose-dependent insulinotropic polypeptide, GIP. Thus, may modulate the gut capacity to absorb sugars, with implications in malabsorption syndromes and diet-related disorders including diabetes and obesity.</text>
</comment>
<comment type="subunit">
    <text evidence="2 10 11">G proteins are composed of 3 units; alpha, beta and gamma, respectively GNAT3, GNB1 and GNG13 for Gustducin heterotrimer for bitter taste transduction (PubMed:38600377, PubMed:38776963). The alpha chain contains the guanine nucleotide binding site (PubMed:38600377, PubMed:38776963). Component of the TAS2R14-GNAT3 complex, consisting of TAS2R14, GNAT3, GNB1 and GNG2; within the complex interacts with TAS2R14; this complex plays a role in the perception of bitterness (PubMed:38600377, PubMed:38776963). Gustducin heterotrimer may also be composed of GNAT3, GNB3 and GNG13 (By similarity).</text>
</comment>
<comment type="subcellular location">
    <subcellularLocation>
        <location evidence="12">Cytoplasm</location>
    </subcellularLocation>
    <text>Dual distribution pattern; plasmalemmal pattern with apical region localization and cytosolic pattern with localization throughout the cytoplasm.</text>
</comment>
<comment type="tissue specificity">
    <text evidence="6 7 9 12">Expressed in taste buds (sensory organs of clustered epithelial cells) of the circumvallate and foliate papillae of the tongue at protein level. Expressed in enteroendocrine L cells of the gut. Detected also in spermatozoa.</text>
</comment>
<comment type="PTM">
    <text evidence="1">Potential N-myristoylation may anchor alpha-subunit to the inner surface of plasma membrane.</text>
</comment>
<comment type="similarity">
    <text evidence="13">Belongs to the G-alpha family. G(i/o/t/z) subfamily.</text>
</comment>
<comment type="sequence caution" evidence="13">
    <conflict type="erroneous gene model prediction">
        <sequence resource="EMBL-CDS" id="EAL24192"/>
    </conflict>
</comment>
<comment type="sequence caution" evidence="13">
    <conflict type="erroneous gene model prediction">
        <sequence resource="EMBL-CDS" id="EAL24193"/>
    </conflict>
</comment>
<gene>
    <name type="primary">GNAT3</name>
</gene>